<dbReference type="EMBL" id="CP000285">
    <property type="protein sequence ID" value="ABE57786.1"/>
    <property type="molecule type" value="Genomic_DNA"/>
</dbReference>
<dbReference type="RefSeq" id="WP_011505732.1">
    <property type="nucleotide sequence ID" value="NC_007963.1"/>
</dbReference>
<dbReference type="SMR" id="Q1R0H2"/>
<dbReference type="STRING" id="290398.Csal_0424"/>
<dbReference type="GeneID" id="95333177"/>
<dbReference type="KEGG" id="csa:Csal_0424"/>
<dbReference type="eggNOG" id="COG0090">
    <property type="taxonomic scope" value="Bacteria"/>
</dbReference>
<dbReference type="HOGENOM" id="CLU_036235_2_1_6"/>
<dbReference type="OrthoDB" id="9778722at2"/>
<dbReference type="Proteomes" id="UP000000239">
    <property type="component" value="Chromosome"/>
</dbReference>
<dbReference type="GO" id="GO:0015934">
    <property type="term" value="C:large ribosomal subunit"/>
    <property type="evidence" value="ECO:0007669"/>
    <property type="project" value="InterPro"/>
</dbReference>
<dbReference type="GO" id="GO:0019843">
    <property type="term" value="F:rRNA binding"/>
    <property type="evidence" value="ECO:0007669"/>
    <property type="project" value="UniProtKB-UniRule"/>
</dbReference>
<dbReference type="GO" id="GO:0003735">
    <property type="term" value="F:structural constituent of ribosome"/>
    <property type="evidence" value="ECO:0007669"/>
    <property type="project" value="InterPro"/>
</dbReference>
<dbReference type="GO" id="GO:0016740">
    <property type="term" value="F:transferase activity"/>
    <property type="evidence" value="ECO:0007669"/>
    <property type="project" value="InterPro"/>
</dbReference>
<dbReference type="GO" id="GO:0002181">
    <property type="term" value="P:cytoplasmic translation"/>
    <property type="evidence" value="ECO:0007669"/>
    <property type="project" value="TreeGrafter"/>
</dbReference>
<dbReference type="FunFam" id="2.30.30.30:FF:000001">
    <property type="entry name" value="50S ribosomal protein L2"/>
    <property type="match status" value="1"/>
</dbReference>
<dbReference type="FunFam" id="2.40.50.140:FF:000003">
    <property type="entry name" value="50S ribosomal protein L2"/>
    <property type="match status" value="1"/>
</dbReference>
<dbReference type="FunFam" id="4.10.950.10:FF:000001">
    <property type="entry name" value="50S ribosomal protein L2"/>
    <property type="match status" value="1"/>
</dbReference>
<dbReference type="Gene3D" id="2.30.30.30">
    <property type="match status" value="1"/>
</dbReference>
<dbReference type="Gene3D" id="2.40.50.140">
    <property type="entry name" value="Nucleic acid-binding proteins"/>
    <property type="match status" value="1"/>
</dbReference>
<dbReference type="Gene3D" id="4.10.950.10">
    <property type="entry name" value="Ribosomal protein L2, domain 3"/>
    <property type="match status" value="1"/>
</dbReference>
<dbReference type="HAMAP" id="MF_01320_B">
    <property type="entry name" value="Ribosomal_uL2_B"/>
    <property type="match status" value="1"/>
</dbReference>
<dbReference type="InterPro" id="IPR012340">
    <property type="entry name" value="NA-bd_OB-fold"/>
</dbReference>
<dbReference type="InterPro" id="IPR014722">
    <property type="entry name" value="Rib_uL2_dom2"/>
</dbReference>
<dbReference type="InterPro" id="IPR002171">
    <property type="entry name" value="Ribosomal_uL2"/>
</dbReference>
<dbReference type="InterPro" id="IPR005880">
    <property type="entry name" value="Ribosomal_uL2_bac/org-type"/>
</dbReference>
<dbReference type="InterPro" id="IPR022669">
    <property type="entry name" value="Ribosomal_uL2_C"/>
</dbReference>
<dbReference type="InterPro" id="IPR022671">
    <property type="entry name" value="Ribosomal_uL2_CS"/>
</dbReference>
<dbReference type="InterPro" id="IPR014726">
    <property type="entry name" value="Ribosomal_uL2_dom3"/>
</dbReference>
<dbReference type="InterPro" id="IPR022666">
    <property type="entry name" value="Ribosomal_uL2_RNA-bd_dom"/>
</dbReference>
<dbReference type="InterPro" id="IPR008991">
    <property type="entry name" value="Translation_prot_SH3-like_sf"/>
</dbReference>
<dbReference type="NCBIfam" id="TIGR01171">
    <property type="entry name" value="rplB_bact"/>
    <property type="match status" value="1"/>
</dbReference>
<dbReference type="PANTHER" id="PTHR13691:SF5">
    <property type="entry name" value="LARGE RIBOSOMAL SUBUNIT PROTEIN UL2M"/>
    <property type="match status" value="1"/>
</dbReference>
<dbReference type="PANTHER" id="PTHR13691">
    <property type="entry name" value="RIBOSOMAL PROTEIN L2"/>
    <property type="match status" value="1"/>
</dbReference>
<dbReference type="Pfam" id="PF00181">
    <property type="entry name" value="Ribosomal_L2"/>
    <property type="match status" value="1"/>
</dbReference>
<dbReference type="Pfam" id="PF03947">
    <property type="entry name" value="Ribosomal_L2_C"/>
    <property type="match status" value="1"/>
</dbReference>
<dbReference type="PIRSF" id="PIRSF002158">
    <property type="entry name" value="Ribosomal_L2"/>
    <property type="match status" value="1"/>
</dbReference>
<dbReference type="SMART" id="SM01383">
    <property type="entry name" value="Ribosomal_L2"/>
    <property type="match status" value="1"/>
</dbReference>
<dbReference type="SMART" id="SM01382">
    <property type="entry name" value="Ribosomal_L2_C"/>
    <property type="match status" value="1"/>
</dbReference>
<dbReference type="SUPFAM" id="SSF50249">
    <property type="entry name" value="Nucleic acid-binding proteins"/>
    <property type="match status" value="1"/>
</dbReference>
<dbReference type="SUPFAM" id="SSF50104">
    <property type="entry name" value="Translation proteins SH3-like domain"/>
    <property type="match status" value="1"/>
</dbReference>
<dbReference type="PROSITE" id="PS00467">
    <property type="entry name" value="RIBOSOMAL_L2"/>
    <property type="match status" value="1"/>
</dbReference>
<sequence length="275" mass="30010">MAVVKTKPTSAGRRHVVKVVSDELHKGRPYDGLLEKKSKSGGRNNNGRITTRHVGGGHRQHYRVVDFKRNKDGIAATVERLEYDPNRSANIALLKYLDGERRYIIAPRGVKVGDSLESGVNAAIKRGNALPLRNIPVGSTVHCIELKPGKGAQIARSAGASAQLVAREGNYATVRLRSGEMRKILAECRATLGEVGNSEHSLRQLGKAGAKRWRGVRPTVRGVAMNPVDHPHGGGEGRTSGGRHPVSPWGIPTKGHKTRKNKRTDKLIVRRRKAK</sequence>
<protein>
    <recommendedName>
        <fullName evidence="1">Large ribosomal subunit protein uL2</fullName>
    </recommendedName>
    <alternativeName>
        <fullName evidence="3">50S ribosomal protein L2</fullName>
    </alternativeName>
</protein>
<evidence type="ECO:0000255" key="1">
    <source>
        <dbReference type="HAMAP-Rule" id="MF_01320"/>
    </source>
</evidence>
<evidence type="ECO:0000256" key="2">
    <source>
        <dbReference type="SAM" id="MobiDB-lite"/>
    </source>
</evidence>
<evidence type="ECO:0000305" key="3"/>
<proteinExistence type="inferred from homology"/>
<name>RL2_CHRSD</name>
<gene>
    <name evidence="1" type="primary">rplB</name>
    <name type="ordered locus">Csal_0424</name>
</gene>
<accession>Q1R0H2</accession>
<keyword id="KW-1185">Reference proteome</keyword>
<keyword id="KW-0687">Ribonucleoprotein</keyword>
<keyword id="KW-0689">Ribosomal protein</keyword>
<keyword id="KW-0694">RNA-binding</keyword>
<keyword id="KW-0699">rRNA-binding</keyword>
<feature type="chain" id="PRO_0000309896" description="Large ribosomal subunit protein uL2">
    <location>
        <begin position="1"/>
        <end position="275"/>
    </location>
</feature>
<feature type="region of interest" description="Disordered" evidence="2">
    <location>
        <begin position="28"/>
        <end position="58"/>
    </location>
</feature>
<feature type="region of interest" description="Disordered" evidence="2">
    <location>
        <begin position="223"/>
        <end position="275"/>
    </location>
</feature>
<feature type="compositionally biased region" description="Basic and acidic residues" evidence="2">
    <location>
        <begin position="28"/>
        <end position="38"/>
    </location>
</feature>
<feature type="compositionally biased region" description="Basic residues" evidence="2">
    <location>
        <begin position="254"/>
        <end position="275"/>
    </location>
</feature>
<reference key="1">
    <citation type="journal article" date="2011" name="Stand. Genomic Sci.">
        <title>Complete genome sequence of the halophilic and highly halotolerant Chromohalobacter salexigens type strain (1H11(T)).</title>
        <authorList>
            <person name="Copeland A."/>
            <person name="O'Connor K."/>
            <person name="Lucas S."/>
            <person name="Lapidus A."/>
            <person name="Berry K.W."/>
            <person name="Detter J.C."/>
            <person name="Del Rio T.G."/>
            <person name="Hammon N."/>
            <person name="Dalin E."/>
            <person name="Tice H."/>
            <person name="Pitluck S."/>
            <person name="Bruce D."/>
            <person name="Goodwin L."/>
            <person name="Han C."/>
            <person name="Tapia R."/>
            <person name="Saunders E."/>
            <person name="Schmutz J."/>
            <person name="Brettin T."/>
            <person name="Larimer F."/>
            <person name="Land M."/>
            <person name="Hauser L."/>
            <person name="Vargas C."/>
            <person name="Nieto J.J."/>
            <person name="Kyrpides N.C."/>
            <person name="Ivanova N."/>
            <person name="Goker M."/>
            <person name="Klenk H.P."/>
            <person name="Csonka L.N."/>
            <person name="Woyke T."/>
        </authorList>
    </citation>
    <scope>NUCLEOTIDE SEQUENCE [LARGE SCALE GENOMIC DNA]</scope>
    <source>
        <strain>ATCC BAA-138 / DSM 3043 / CIP 106854 / NCIMB 13768 / 1H11</strain>
    </source>
</reference>
<comment type="function">
    <text evidence="1">One of the primary rRNA binding proteins. Required for association of the 30S and 50S subunits to form the 70S ribosome, for tRNA binding and peptide bond formation. It has been suggested to have peptidyltransferase activity; this is somewhat controversial. Makes several contacts with the 16S rRNA in the 70S ribosome.</text>
</comment>
<comment type="subunit">
    <text evidence="1">Part of the 50S ribosomal subunit. Forms a bridge to the 30S subunit in the 70S ribosome.</text>
</comment>
<comment type="similarity">
    <text evidence="1">Belongs to the universal ribosomal protein uL2 family.</text>
</comment>
<organism>
    <name type="scientific">Chromohalobacter salexigens (strain ATCC BAA-138 / DSM 3043 / CIP 106854 / NCIMB 13768 / 1H11)</name>
    <dbReference type="NCBI Taxonomy" id="290398"/>
    <lineage>
        <taxon>Bacteria</taxon>
        <taxon>Pseudomonadati</taxon>
        <taxon>Pseudomonadota</taxon>
        <taxon>Gammaproteobacteria</taxon>
        <taxon>Oceanospirillales</taxon>
        <taxon>Halomonadaceae</taxon>
        <taxon>Chromohalobacter</taxon>
    </lineage>
</organism>